<name>PRMA_CUPTR</name>
<organism>
    <name type="scientific">Cupriavidus taiwanensis (strain DSM 17343 / BCRC 17206 / CCUG 44338 / CIP 107171 / LMG 19424 / R1)</name>
    <name type="common">Ralstonia taiwanensis (strain LMG 19424)</name>
    <dbReference type="NCBI Taxonomy" id="977880"/>
    <lineage>
        <taxon>Bacteria</taxon>
        <taxon>Pseudomonadati</taxon>
        <taxon>Pseudomonadota</taxon>
        <taxon>Betaproteobacteria</taxon>
        <taxon>Burkholderiales</taxon>
        <taxon>Burkholderiaceae</taxon>
        <taxon>Cupriavidus</taxon>
    </lineage>
</organism>
<gene>
    <name evidence="1" type="primary">prmA</name>
    <name type="ordered locus">RALTA_A2648</name>
</gene>
<reference key="1">
    <citation type="journal article" date="2008" name="Genome Res.">
        <title>Genome sequence of the beta-rhizobium Cupriavidus taiwanensis and comparative genomics of rhizobia.</title>
        <authorList>
            <person name="Amadou C."/>
            <person name="Pascal G."/>
            <person name="Mangenot S."/>
            <person name="Glew M."/>
            <person name="Bontemps C."/>
            <person name="Capela D."/>
            <person name="Carrere S."/>
            <person name="Cruveiller S."/>
            <person name="Dossat C."/>
            <person name="Lajus A."/>
            <person name="Marchetti M."/>
            <person name="Poinsot V."/>
            <person name="Rouy Z."/>
            <person name="Servin B."/>
            <person name="Saad M."/>
            <person name="Schenowitz C."/>
            <person name="Barbe V."/>
            <person name="Batut J."/>
            <person name="Medigue C."/>
            <person name="Masson-Boivin C."/>
        </authorList>
    </citation>
    <scope>NUCLEOTIDE SEQUENCE [LARGE SCALE GENOMIC DNA]</scope>
    <source>
        <strain>DSM 17343 / BCRC 17206 / CCUG 44338 / CIP 107171 / LMG 19424 / R1</strain>
    </source>
</reference>
<comment type="function">
    <text evidence="1">Methylates ribosomal protein L11.</text>
</comment>
<comment type="catalytic activity">
    <reaction evidence="1">
        <text>L-lysyl-[protein] + 3 S-adenosyl-L-methionine = N(6),N(6),N(6)-trimethyl-L-lysyl-[protein] + 3 S-adenosyl-L-homocysteine + 3 H(+)</text>
        <dbReference type="Rhea" id="RHEA:54192"/>
        <dbReference type="Rhea" id="RHEA-COMP:9752"/>
        <dbReference type="Rhea" id="RHEA-COMP:13826"/>
        <dbReference type="ChEBI" id="CHEBI:15378"/>
        <dbReference type="ChEBI" id="CHEBI:29969"/>
        <dbReference type="ChEBI" id="CHEBI:57856"/>
        <dbReference type="ChEBI" id="CHEBI:59789"/>
        <dbReference type="ChEBI" id="CHEBI:61961"/>
    </reaction>
</comment>
<comment type="subcellular location">
    <subcellularLocation>
        <location evidence="1">Cytoplasm</location>
    </subcellularLocation>
</comment>
<comment type="similarity">
    <text evidence="1">Belongs to the methyltransferase superfamily. PrmA family.</text>
</comment>
<accession>B3R6K3</accession>
<sequence>MAFQECVIEVAQDQAEAWSDALFDLGALSVSVEDADADTPDEQPLFGEPGLEPKQLAWNRSRVVALFGDDADPAVVVAAAANQLGIDPVPPYQLRAVEDQDWVRLTQSQFEPIRVGERIWVVPSWHDAPEPDAVVLELDPGLAFGTGSHPTTRLCMQWLEQNLTPGETVLDYGCGSGILAIVARKLGAGDTVGIDIDPNAVEASRYNAERNHVEASFALPESVSDASYDLVVANILSNPLKLMAAMLSARVRAGGRLVLSGVLERQAEEVAAAYAPWLPLTVWRSEEGWVCLHGTRP</sequence>
<protein>
    <recommendedName>
        <fullName evidence="1">Ribosomal protein L11 methyltransferase</fullName>
        <shortName evidence="1">L11 Mtase</shortName>
        <ecNumber evidence="1">2.1.1.-</ecNumber>
    </recommendedName>
</protein>
<keyword id="KW-0963">Cytoplasm</keyword>
<keyword id="KW-0489">Methyltransferase</keyword>
<keyword id="KW-0949">S-adenosyl-L-methionine</keyword>
<keyword id="KW-0808">Transferase</keyword>
<proteinExistence type="inferred from homology"/>
<evidence type="ECO:0000255" key="1">
    <source>
        <dbReference type="HAMAP-Rule" id="MF_00735"/>
    </source>
</evidence>
<dbReference type="EC" id="2.1.1.-" evidence="1"/>
<dbReference type="EMBL" id="CU633749">
    <property type="protein sequence ID" value="CAQ70579.1"/>
    <property type="molecule type" value="Genomic_DNA"/>
</dbReference>
<dbReference type="RefSeq" id="WP_012353875.1">
    <property type="nucleotide sequence ID" value="NC_010528.1"/>
</dbReference>
<dbReference type="SMR" id="B3R6K3"/>
<dbReference type="GeneID" id="29760962"/>
<dbReference type="KEGG" id="cti:RALTA_A2648"/>
<dbReference type="eggNOG" id="COG2264">
    <property type="taxonomic scope" value="Bacteria"/>
</dbReference>
<dbReference type="HOGENOM" id="CLU_049382_4_1_4"/>
<dbReference type="BioCyc" id="CTAI977880:RALTA_RS12880-MONOMER"/>
<dbReference type="Proteomes" id="UP000001692">
    <property type="component" value="Chromosome 1"/>
</dbReference>
<dbReference type="GO" id="GO:0005829">
    <property type="term" value="C:cytosol"/>
    <property type="evidence" value="ECO:0007669"/>
    <property type="project" value="TreeGrafter"/>
</dbReference>
<dbReference type="GO" id="GO:0016279">
    <property type="term" value="F:protein-lysine N-methyltransferase activity"/>
    <property type="evidence" value="ECO:0007669"/>
    <property type="project" value="TreeGrafter"/>
</dbReference>
<dbReference type="GO" id="GO:0032259">
    <property type="term" value="P:methylation"/>
    <property type="evidence" value="ECO:0007669"/>
    <property type="project" value="UniProtKB-KW"/>
</dbReference>
<dbReference type="CDD" id="cd02440">
    <property type="entry name" value="AdoMet_MTases"/>
    <property type="match status" value="1"/>
</dbReference>
<dbReference type="Gene3D" id="3.40.50.150">
    <property type="entry name" value="Vaccinia Virus protein VP39"/>
    <property type="match status" value="1"/>
</dbReference>
<dbReference type="HAMAP" id="MF_00735">
    <property type="entry name" value="Methyltr_PrmA"/>
    <property type="match status" value="1"/>
</dbReference>
<dbReference type="InterPro" id="IPR050078">
    <property type="entry name" value="Ribosomal_L11_MeTrfase_PrmA"/>
</dbReference>
<dbReference type="InterPro" id="IPR004498">
    <property type="entry name" value="Ribosomal_PrmA_MeTrfase"/>
</dbReference>
<dbReference type="InterPro" id="IPR029063">
    <property type="entry name" value="SAM-dependent_MTases_sf"/>
</dbReference>
<dbReference type="NCBIfam" id="TIGR00406">
    <property type="entry name" value="prmA"/>
    <property type="match status" value="1"/>
</dbReference>
<dbReference type="PANTHER" id="PTHR43648">
    <property type="entry name" value="ELECTRON TRANSFER FLAVOPROTEIN BETA SUBUNIT LYSINE METHYLTRANSFERASE"/>
    <property type="match status" value="1"/>
</dbReference>
<dbReference type="PANTHER" id="PTHR43648:SF1">
    <property type="entry name" value="ELECTRON TRANSFER FLAVOPROTEIN BETA SUBUNIT LYSINE METHYLTRANSFERASE"/>
    <property type="match status" value="1"/>
</dbReference>
<dbReference type="Pfam" id="PF06325">
    <property type="entry name" value="PrmA"/>
    <property type="match status" value="1"/>
</dbReference>
<dbReference type="PIRSF" id="PIRSF000401">
    <property type="entry name" value="RPL11_MTase"/>
    <property type="match status" value="1"/>
</dbReference>
<dbReference type="SUPFAM" id="SSF53335">
    <property type="entry name" value="S-adenosyl-L-methionine-dependent methyltransferases"/>
    <property type="match status" value="1"/>
</dbReference>
<feature type="chain" id="PRO_1000192610" description="Ribosomal protein L11 methyltransferase">
    <location>
        <begin position="1"/>
        <end position="297"/>
    </location>
</feature>
<feature type="binding site" evidence="1">
    <location>
        <position position="152"/>
    </location>
    <ligand>
        <name>S-adenosyl-L-methionine</name>
        <dbReference type="ChEBI" id="CHEBI:59789"/>
    </ligand>
</feature>
<feature type="binding site" evidence="1">
    <location>
        <position position="173"/>
    </location>
    <ligand>
        <name>S-adenosyl-L-methionine</name>
        <dbReference type="ChEBI" id="CHEBI:59789"/>
    </ligand>
</feature>
<feature type="binding site" evidence="1">
    <location>
        <position position="195"/>
    </location>
    <ligand>
        <name>S-adenosyl-L-methionine</name>
        <dbReference type="ChEBI" id="CHEBI:59789"/>
    </ligand>
</feature>
<feature type="binding site" evidence="1">
    <location>
        <position position="234"/>
    </location>
    <ligand>
        <name>S-adenosyl-L-methionine</name>
        <dbReference type="ChEBI" id="CHEBI:59789"/>
    </ligand>
</feature>